<organism>
    <name type="scientific">Escherichia coli O45:K1 (strain S88 / ExPEC)</name>
    <dbReference type="NCBI Taxonomy" id="585035"/>
    <lineage>
        <taxon>Bacteria</taxon>
        <taxon>Pseudomonadati</taxon>
        <taxon>Pseudomonadota</taxon>
        <taxon>Gammaproteobacteria</taxon>
        <taxon>Enterobacterales</taxon>
        <taxon>Enterobacteriaceae</taxon>
        <taxon>Escherichia</taxon>
    </lineage>
</organism>
<comment type="function">
    <text evidence="1">Catalyzes the prenylation of para-hydroxybenzoate (PHB) with an all-trans polyprenyl group. Mediates the second step in the final reaction sequence of ubiquinone-8 (UQ-8) biosynthesis, which is the condensation of the polyisoprenoid side chain with PHB, generating the first membrane-bound Q intermediate 3-octaprenyl-4-hydroxybenzoate.</text>
</comment>
<comment type="catalytic activity">
    <reaction evidence="1">
        <text>all-trans-octaprenyl diphosphate + 4-hydroxybenzoate = 4-hydroxy-3-(all-trans-octaprenyl)benzoate + diphosphate</text>
        <dbReference type="Rhea" id="RHEA:27782"/>
        <dbReference type="ChEBI" id="CHEBI:1617"/>
        <dbReference type="ChEBI" id="CHEBI:17879"/>
        <dbReference type="ChEBI" id="CHEBI:33019"/>
        <dbReference type="ChEBI" id="CHEBI:57711"/>
        <dbReference type="EC" id="2.5.1.39"/>
    </reaction>
</comment>
<comment type="cofactor">
    <cofactor evidence="1">
        <name>Mg(2+)</name>
        <dbReference type="ChEBI" id="CHEBI:18420"/>
    </cofactor>
</comment>
<comment type="pathway">
    <text evidence="1">Cofactor biosynthesis; ubiquinone biosynthesis.</text>
</comment>
<comment type="subcellular location">
    <subcellularLocation>
        <location evidence="1">Cell inner membrane</location>
        <topology evidence="1">Multi-pass membrane protein</topology>
    </subcellularLocation>
</comment>
<comment type="similarity">
    <text evidence="1">Belongs to the UbiA prenyltransferase family.</text>
</comment>
<accession>B7MJ30</accession>
<reference key="1">
    <citation type="journal article" date="2009" name="PLoS Genet.">
        <title>Organised genome dynamics in the Escherichia coli species results in highly diverse adaptive paths.</title>
        <authorList>
            <person name="Touchon M."/>
            <person name="Hoede C."/>
            <person name="Tenaillon O."/>
            <person name="Barbe V."/>
            <person name="Baeriswyl S."/>
            <person name="Bidet P."/>
            <person name="Bingen E."/>
            <person name="Bonacorsi S."/>
            <person name="Bouchier C."/>
            <person name="Bouvet O."/>
            <person name="Calteau A."/>
            <person name="Chiapello H."/>
            <person name="Clermont O."/>
            <person name="Cruveiller S."/>
            <person name="Danchin A."/>
            <person name="Diard M."/>
            <person name="Dossat C."/>
            <person name="Karoui M.E."/>
            <person name="Frapy E."/>
            <person name="Garry L."/>
            <person name="Ghigo J.M."/>
            <person name="Gilles A.M."/>
            <person name="Johnson J."/>
            <person name="Le Bouguenec C."/>
            <person name="Lescat M."/>
            <person name="Mangenot S."/>
            <person name="Martinez-Jehanne V."/>
            <person name="Matic I."/>
            <person name="Nassif X."/>
            <person name="Oztas S."/>
            <person name="Petit M.A."/>
            <person name="Pichon C."/>
            <person name="Rouy Z."/>
            <person name="Ruf C.S."/>
            <person name="Schneider D."/>
            <person name="Tourret J."/>
            <person name="Vacherie B."/>
            <person name="Vallenet D."/>
            <person name="Medigue C."/>
            <person name="Rocha E.P.C."/>
            <person name="Denamur E."/>
        </authorList>
    </citation>
    <scope>NUCLEOTIDE SEQUENCE [LARGE SCALE GENOMIC DNA]</scope>
    <source>
        <strain>S88 / ExPEC</strain>
    </source>
</reference>
<sequence length="290" mass="32546">MEWSLTQNKLLAFHRLMRTDKPIGALLLLWPTLWALWVATPGVPQLWILAVFVAGVWLMRAAGCVVNDYADRKFDGHVKRTANRPLPSGAVTEKEARALFVVLVLISFLLVLTLNTMTILLSIAALALAWVYPFMKRYTHLPQVVLGAAFGWSIPMAFAAVSESVPLSCWLMFLANILWAVAYDTQYAMVDRDDDVKIGIKSTAILFGQYDKLIIGIFQIGVLALMAIIGELNGLGWGYYWSILVAGALFVYQQKLIANREREACFKAFMNNNYVGLVLFLGLAMSYWHF</sequence>
<keyword id="KW-0997">Cell inner membrane</keyword>
<keyword id="KW-1003">Cell membrane</keyword>
<keyword id="KW-0460">Magnesium</keyword>
<keyword id="KW-0472">Membrane</keyword>
<keyword id="KW-1185">Reference proteome</keyword>
<keyword id="KW-0808">Transferase</keyword>
<keyword id="KW-0812">Transmembrane</keyword>
<keyword id="KW-1133">Transmembrane helix</keyword>
<keyword id="KW-0831">Ubiquinone biosynthesis</keyword>
<feature type="chain" id="PRO_1000186664" description="4-hydroxybenzoate octaprenyltransferase">
    <location>
        <begin position="1"/>
        <end position="290"/>
    </location>
</feature>
<feature type="transmembrane region" description="Helical" evidence="1">
    <location>
        <begin position="23"/>
        <end position="43"/>
    </location>
</feature>
<feature type="transmembrane region" description="Helical" evidence="1">
    <location>
        <begin position="46"/>
        <end position="66"/>
    </location>
</feature>
<feature type="transmembrane region" description="Helical" evidence="1">
    <location>
        <begin position="99"/>
        <end position="119"/>
    </location>
</feature>
<feature type="transmembrane region" description="Helical" evidence="1">
    <location>
        <begin position="141"/>
        <end position="161"/>
    </location>
</feature>
<feature type="transmembrane region" description="Helical" evidence="1">
    <location>
        <begin position="163"/>
        <end position="183"/>
    </location>
</feature>
<feature type="transmembrane region" description="Helical" evidence="1">
    <location>
        <begin position="213"/>
        <end position="233"/>
    </location>
</feature>
<feature type="transmembrane region" description="Helical" evidence="1">
    <location>
        <begin position="234"/>
        <end position="254"/>
    </location>
</feature>
<feature type="transmembrane region" description="Helical" evidence="1">
    <location>
        <begin position="268"/>
        <end position="288"/>
    </location>
</feature>
<dbReference type="EC" id="2.5.1.39" evidence="1"/>
<dbReference type="EMBL" id="CU928161">
    <property type="protein sequence ID" value="CAR05674.1"/>
    <property type="molecule type" value="Genomic_DNA"/>
</dbReference>
<dbReference type="RefSeq" id="WP_000455225.1">
    <property type="nucleotide sequence ID" value="NC_011742.1"/>
</dbReference>
<dbReference type="SMR" id="B7MJ30"/>
<dbReference type="KEGG" id="ecz:ECS88_4513"/>
<dbReference type="HOGENOM" id="CLU_034879_1_0_6"/>
<dbReference type="UniPathway" id="UPA00232"/>
<dbReference type="Proteomes" id="UP000000747">
    <property type="component" value="Chromosome"/>
</dbReference>
<dbReference type="GO" id="GO:0005886">
    <property type="term" value="C:plasma membrane"/>
    <property type="evidence" value="ECO:0007669"/>
    <property type="project" value="UniProtKB-SubCell"/>
</dbReference>
<dbReference type="GO" id="GO:0008412">
    <property type="term" value="F:4-hydroxybenzoate polyprenyltransferase activity"/>
    <property type="evidence" value="ECO:0007669"/>
    <property type="project" value="UniProtKB-UniRule"/>
</dbReference>
<dbReference type="GO" id="GO:0006744">
    <property type="term" value="P:ubiquinone biosynthetic process"/>
    <property type="evidence" value="ECO:0007669"/>
    <property type="project" value="UniProtKB-UniRule"/>
</dbReference>
<dbReference type="CDD" id="cd13959">
    <property type="entry name" value="PT_UbiA_COQ2"/>
    <property type="match status" value="1"/>
</dbReference>
<dbReference type="FunFam" id="1.10.357.140:FF:000002">
    <property type="entry name" value="4-hydroxybenzoate octaprenyltransferase"/>
    <property type="match status" value="1"/>
</dbReference>
<dbReference type="FunFam" id="1.20.120.1780:FF:000001">
    <property type="entry name" value="4-hydroxybenzoate octaprenyltransferase"/>
    <property type="match status" value="1"/>
</dbReference>
<dbReference type="Gene3D" id="1.10.357.140">
    <property type="entry name" value="UbiA prenyltransferase"/>
    <property type="match status" value="1"/>
</dbReference>
<dbReference type="Gene3D" id="1.20.120.1780">
    <property type="entry name" value="UbiA prenyltransferase"/>
    <property type="match status" value="1"/>
</dbReference>
<dbReference type="HAMAP" id="MF_01635">
    <property type="entry name" value="UbiA"/>
    <property type="match status" value="1"/>
</dbReference>
<dbReference type="InterPro" id="IPR006370">
    <property type="entry name" value="HB_polyprenyltransferase-like"/>
</dbReference>
<dbReference type="InterPro" id="IPR039653">
    <property type="entry name" value="Prenyltransferase"/>
</dbReference>
<dbReference type="InterPro" id="IPR000537">
    <property type="entry name" value="UbiA_prenyltransferase"/>
</dbReference>
<dbReference type="InterPro" id="IPR030470">
    <property type="entry name" value="UbiA_prenylTrfase_CS"/>
</dbReference>
<dbReference type="InterPro" id="IPR044878">
    <property type="entry name" value="UbiA_sf"/>
</dbReference>
<dbReference type="NCBIfam" id="TIGR01474">
    <property type="entry name" value="ubiA_proteo"/>
    <property type="match status" value="1"/>
</dbReference>
<dbReference type="PANTHER" id="PTHR11048:SF28">
    <property type="entry name" value="4-HYDROXYBENZOATE POLYPRENYLTRANSFERASE, MITOCHONDRIAL"/>
    <property type="match status" value="1"/>
</dbReference>
<dbReference type="PANTHER" id="PTHR11048">
    <property type="entry name" value="PRENYLTRANSFERASES"/>
    <property type="match status" value="1"/>
</dbReference>
<dbReference type="Pfam" id="PF01040">
    <property type="entry name" value="UbiA"/>
    <property type="match status" value="1"/>
</dbReference>
<dbReference type="PROSITE" id="PS00943">
    <property type="entry name" value="UBIA"/>
    <property type="match status" value="1"/>
</dbReference>
<gene>
    <name evidence="1" type="primary">ubiA</name>
    <name type="ordered locus">ECS88_4513</name>
</gene>
<protein>
    <recommendedName>
        <fullName evidence="1">4-hydroxybenzoate octaprenyltransferase</fullName>
        <ecNumber evidence="1">2.5.1.39</ecNumber>
    </recommendedName>
    <alternativeName>
        <fullName evidence="1">4-HB polyprenyltransferase</fullName>
    </alternativeName>
</protein>
<name>UBIA_ECO45</name>
<proteinExistence type="inferred from homology"/>
<evidence type="ECO:0000255" key="1">
    <source>
        <dbReference type="HAMAP-Rule" id="MF_01635"/>
    </source>
</evidence>